<feature type="chain" id="PRO_1000064171" description="Glycerol-3-phosphate acyltransferase">
    <location>
        <begin position="1"/>
        <end position="205"/>
    </location>
</feature>
<feature type="topological domain" description="Periplasmic" evidence="1">
    <location>
        <begin position="1"/>
        <end position="3"/>
    </location>
</feature>
<feature type="transmembrane region" description="Helical" evidence="1">
    <location>
        <begin position="4"/>
        <end position="24"/>
    </location>
</feature>
<feature type="topological domain" description="Cytoplasmic" evidence="1">
    <location>
        <begin position="25"/>
        <end position="52"/>
    </location>
</feature>
<feature type="transmembrane region" description="Helical" evidence="1">
    <location>
        <begin position="53"/>
        <end position="73"/>
    </location>
</feature>
<feature type="topological domain" description="Periplasmic" evidence="1">
    <location>
        <begin position="74"/>
        <end position="80"/>
    </location>
</feature>
<feature type="transmembrane region" description="Helical" evidence="1">
    <location>
        <begin position="81"/>
        <end position="101"/>
    </location>
</feature>
<feature type="topological domain" description="Cytoplasmic" evidence="1">
    <location>
        <begin position="102"/>
        <end position="111"/>
    </location>
</feature>
<feature type="transmembrane region" description="Helical" evidence="1">
    <location>
        <begin position="112"/>
        <end position="132"/>
    </location>
</feature>
<feature type="topological domain" description="Periplasmic" evidence="1">
    <location>
        <begin position="133"/>
        <end position="137"/>
    </location>
</feature>
<feature type="transmembrane region" description="Helical" evidence="1">
    <location>
        <begin position="138"/>
        <end position="158"/>
    </location>
</feature>
<feature type="topological domain" description="Cytoplasmic" evidence="1">
    <location>
        <begin position="159"/>
        <end position="205"/>
    </location>
</feature>
<evidence type="ECO:0000255" key="1">
    <source>
        <dbReference type="HAMAP-Rule" id="MF_01043"/>
    </source>
</evidence>
<keyword id="KW-0997">Cell inner membrane</keyword>
<keyword id="KW-1003">Cell membrane</keyword>
<keyword id="KW-0444">Lipid biosynthesis</keyword>
<keyword id="KW-0443">Lipid metabolism</keyword>
<keyword id="KW-0472">Membrane</keyword>
<keyword id="KW-0594">Phospholipid biosynthesis</keyword>
<keyword id="KW-1208">Phospholipid metabolism</keyword>
<keyword id="KW-1185">Reference proteome</keyword>
<keyword id="KW-0808">Transferase</keyword>
<keyword id="KW-0812">Transmembrane</keyword>
<keyword id="KW-1133">Transmembrane helix</keyword>
<name>PLSY_ECOK1</name>
<gene>
    <name evidence="1" type="primary">plsY</name>
    <name type="synonym">ygiH</name>
    <name type="ordered locus">Ecok1_30770</name>
    <name type="ORF">APECO1_3355</name>
</gene>
<protein>
    <recommendedName>
        <fullName evidence="1">Glycerol-3-phosphate acyltransferase</fullName>
    </recommendedName>
    <alternativeName>
        <fullName evidence="1">G3P acyltransferase</fullName>
        <shortName evidence="1">GPAT</shortName>
        <ecNumber evidence="1">2.3.1.15</ecNumber>
        <ecNumber evidence="1">2.3.1.n5</ecNumber>
    </alternativeName>
    <alternativeName>
        <fullName evidence="1">Lysophosphatidic acid synthase</fullName>
        <shortName evidence="1">LPA synthase</shortName>
    </alternativeName>
</protein>
<sequence length="205" mass="22193">MSAIAPGMILIAYLCGSISSAILVCRLCGLPDPRTSGSGNPGATNVLRIGGKGAAVAVLIFDVLKGMLPVWGAYELGVSPFWLGLIAIAACLGHIWPVFFGFKGGKGVATAFGAIAPIGWDLTGVMAGTWLLTVLLSGYSSLGAIVSALIAPFYVWWFKPQFTFPVSMLSCLILLRHHDNIQRLWRRQETKIWTKFKRKREKDPE</sequence>
<dbReference type="EC" id="2.3.1.15" evidence="1"/>
<dbReference type="EC" id="2.3.1.n5" evidence="1"/>
<dbReference type="EMBL" id="CP000468">
    <property type="protein sequence ID" value="ABJ02571.1"/>
    <property type="molecule type" value="Genomic_DNA"/>
</dbReference>
<dbReference type="RefSeq" id="WP_001272796.1">
    <property type="nucleotide sequence ID" value="NZ_CADILS010000003.1"/>
</dbReference>
<dbReference type="SMR" id="A1AFY1"/>
<dbReference type="GeneID" id="93778934"/>
<dbReference type="KEGG" id="ecv:APECO1_3355"/>
<dbReference type="HOGENOM" id="CLU_081254_0_2_6"/>
<dbReference type="UniPathway" id="UPA00085"/>
<dbReference type="Proteomes" id="UP000008216">
    <property type="component" value="Chromosome"/>
</dbReference>
<dbReference type="GO" id="GO:0005886">
    <property type="term" value="C:plasma membrane"/>
    <property type="evidence" value="ECO:0007669"/>
    <property type="project" value="UniProtKB-SubCell"/>
</dbReference>
<dbReference type="GO" id="GO:0043772">
    <property type="term" value="F:acyl-phosphate glycerol-3-phosphate acyltransferase activity"/>
    <property type="evidence" value="ECO:0007669"/>
    <property type="project" value="InterPro"/>
</dbReference>
<dbReference type="GO" id="GO:0004366">
    <property type="term" value="F:glycerol-3-phosphate O-acyltransferase activity"/>
    <property type="evidence" value="ECO:0007669"/>
    <property type="project" value="UniProtKB-UniRule"/>
</dbReference>
<dbReference type="GO" id="GO:0008654">
    <property type="term" value="P:phospholipid biosynthetic process"/>
    <property type="evidence" value="ECO:0007669"/>
    <property type="project" value="UniProtKB-UniRule"/>
</dbReference>
<dbReference type="HAMAP" id="MF_01043">
    <property type="entry name" value="PlsY"/>
    <property type="match status" value="1"/>
</dbReference>
<dbReference type="InterPro" id="IPR003811">
    <property type="entry name" value="G3P_acylTferase_PlsY"/>
</dbReference>
<dbReference type="NCBIfam" id="TIGR00023">
    <property type="entry name" value="glycerol-3-phosphate 1-O-acyltransferase PlsY"/>
    <property type="match status" value="1"/>
</dbReference>
<dbReference type="PANTHER" id="PTHR30309:SF0">
    <property type="entry name" value="GLYCEROL-3-PHOSPHATE ACYLTRANSFERASE-RELATED"/>
    <property type="match status" value="1"/>
</dbReference>
<dbReference type="PANTHER" id="PTHR30309">
    <property type="entry name" value="INNER MEMBRANE PROTEIN YGIH"/>
    <property type="match status" value="1"/>
</dbReference>
<dbReference type="Pfam" id="PF02660">
    <property type="entry name" value="G3P_acyltransf"/>
    <property type="match status" value="1"/>
</dbReference>
<dbReference type="SMART" id="SM01207">
    <property type="entry name" value="G3P_acyltransf"/>
    <property type="match status" value="1"/>
</dbReference>
<comment type="function">
    <text evidence="1">Catalyzes the transfer of an acyl group from acyl-ACP to glycerol-3-phosphate (G3P) to form lysophosphatidic acid (LPA). This enzyme can also utilize acyl-CoA as fatty acyl donor, but not acyl-PO(4).</text>
</comment>
<comment type="catalytic activity">
    <reaction evidence="1">
        <text>sn-glycerol 3-phosphate + an acyl-CoA = a 1-acyl-sn-glycero-3-phosphate + CoA</text>
        <dbReference type="Rhea" id="RHEA:15325"/>
        <dbReference type="ChEBI" id="CHEBI:57287"/>
        <dbReference type="ChEBI" id="CHEBI:57597"/>
        <dbReference type="ChEBI" id="CHEBI:57970"/>
        <dbReference type="ChEBI" id="CHEBI:58342"/>
        <dbReference type="EC" id="2.3.1.15"/>
    </reaction>
</comment>
<comment type="catalytic activity">
    <reaction evidence="1">
        <text>a fatty acyl-[ACP] + sn-glycerol 3-phosphate = a 1-acyl-sn-glycero-3-phosphate + holo-[ACP]</text>
        <dbReference type="Rhea" id="RHEA:42300"/>
        <dbReference type="Rhea" id="RHEA-COMP:9685"/>
        <dbReference type="Rhea" id="RHEA-COMP:14125"/>
        <dbReference type="ChEBI" id="CHEBI:57597"/>
        <dbReference type="ChEBI" id="CHEBI:57970"/>
        <dbReference type="ChEBI" id="CHEBI:64479"/>
        <dbReference type="ChEBI" id="CHEBI:138651"/>
        <dbReference type="EC" id="2.3.1.n5"/>
    </reaction>
</comment>
<comment type="pathway">
    <text evidence="1">Lipid metabolism; phospholipid metabolism.</text>
</comment>
<comment type="subunit">
    <text evidence="1">Probably interacts with PlsX.</text>
</comment>
<comment type="subcellular location">
    <subcellularLocation>
        <location evidence="1">Cell inner membrane</location>
        <topology evidence="1">Multi-pass membrane protein</topology>
    </subcellularLocation>
</comment>
<comment type="similarity">
    <text evidence="1">Belongs to the PlsY family.</text>
</comment>
<accession>A1AFY1</accession>
<organism>
    <name type="scientific">Escherichia coli O1:K1 / APEC</name>
    <dbReference type="NCBI Taxonomy" id="405955"/>
    <lineage>
        <taxon>Bacteria</taxon>
        <taxon>Pseudomonadati</taxon>
        <taxon>Pseudomonadota</taxon>
        <taxon>Gammaproteobacteria</taxon>
        <taxon>Enterobacterales</taxon>
        <taxon>Enterobacteriaceae</taxon>
        <taxon>Escherichia</taxon>
    </lineage>
</organism>
<proteinExistence type="inferred from homology"/>
<reference key="1">
    <citation type="journal article" date="2007" name="J. Bacteriol.">
        <title>The genome sequence of avian pathogenic Escherichia coli strain O1:K1:H7 shares strong similarities with human extraintestinal pathogenic E. coli genomes.</title>
        <authorList>
            <person name="Johnson T.J."/>
            <person name="Kariyawasam S."/>
            <person name="Wannemuehler Y."/>
            <person name="Mangiamele P."/>
            <person name="Johnson S.J."/>
            <person name="Doetkott C."/>
            <person name="Skyberg J.A."/>
            <person name="Lynne A.M."/>
            <person name="Johnson J.R."/>
            <person name="Nolan L.K."/>
        </authorList>
    </citation>
    <scope>NUCLEOTIDE SEQUENCE [LARGE SCALE GENOMIC DNA]</scope>
</reference>